<reference key="1">
    <citation type="submission" date="2007-11" db="EMBL/GenBank/DDBJ databases">
        <authorList>
            <consortium name="The Salmonella enterica serovar Arizonae Genome Sequencing Project"/>
            <person name="McClelland M."/>
            <person name="Sanderson E.K."/>
            <person name="Porwollik S."/>
            <person name="Spieth J."/>
            <person name="Clifton W.S."/>
            <person name="Fulton R."/>
            <person name="Chunyan W."/>
            <person name="Wollam A."/>
            <person name="Shah N."/>
            <person name="Pepin K."/>
            <person name="Bhonagiri V."/>
            <person name="Nash W."/>
            <person name="Johnson M."/>
            <person name="Thiruvilangam P."/>
            <person name="Wilson R."/>
        </authorList>
    </citation>
    <scope>NUCLEOTIDE SEQUENCE [LARGE SCALE GENOMIC DNA]</scope>
    <source>
        <strain>ATCC BAA-731 / CDC346-86 / RSK2980</strain>
    </source>
</reference>
<comment type="function">
    <text evidence="1">Specifically methylates the adenine in position 1618 of 23S rRNA.</text>
</comment>
<comment type="catalytic activity">
    <reaction evidence="1">
        <text>adenosine(1618) in 23S rRNA + S-adenosyl-L-methionine = N(6)-methyladenosine(1618) in 23S rRNA + S-adenosyl-L-homocysteine + H(+)</text>
        <dbReference type="Rhea" id="RHEA:16497"/>
        <dbReference type="Rhea" id="RHEA-COMP:10229"/>
        <dbReference type="Rhea" id="RHEA-COMP:10231"/>
        <dbReference type="ChEBI" id="CHEBI:15378"/>
        <dbReference type="ChEBI" id="CHEBI:57856"/>
        <dbReference type="ChEBI" id="CHEBI:59789"/>
        <dbReference type="ChEBI" id="CHEBI:74411"/>
        <dbReference type="ChEBI" id="CHEBI:74449"/>
        <dbReference type="EC" id="2.1.1.181"/>
    </reaction>
</comment>
<comment type="subcellular location">
    <subcellularLocation>
        <location evidence="1">Cytoplasm</location>
    </subcellularLocation>
</comment>
<comment type="similarity">
    <text evidence="1">Belongs to the methyltransferase superfamily. METTL16/RlmF family.</text>
</comment>
<protein>
    <recommendedName>
        <fullName evidence="1">Ribosomal RNA large subunit methyltransferase F</fullName>
        <ecNumber evidence="1">2.1.1.181</ecNumber>
    </recommendedName>
    <alternativeName>
        <fullName evidence="1">23S rRNA mA1618 methyltransferase</fullName>
    </alternativeName>
    <alternativeName>
        <fullName evidence="1">rRNA adenine N-6-methyltransferase</fullName>
    </alternativeName>
</protein>
<sequence>MSAQKPGLHPRNRHQHRYDLAALCQTTPELTSFLTRTPAGEQSVDFANPQAVKALNKALLAHFYAVTHWDIPQGFLCPPVPGRADYIHHLADLLGETTGSIPVQANILDVGVGANCIYPLIGAYEYGWRFTGSEISEAAMSSAQAIIQANTGLSRAIRLRRQKDSTAIFTGIIHKNEYYDATLCNPPFHDSAAAARAGSERKRRNLGQKRDDVLNFGGQQQELCCEGGEVTFIKKMIAESQTFRRQVLWFTTLVSRGENLPPLYRALTEVGAVKVVKKEMAQGQKQSRFIAWTFMDDDQRRRFITRKR</sequence>
<proteinExistence type="inferred from homology"/>
<accession>A9MIS5</accession>
<dbReference type="EC" id="2.1.1.181" evidence="1"/>
<dbReference type="EMBL" id="CP000880">
    <property type="protein sequence ID" value="ABX21978.1"/>
    <property type="molecule type" value="Genomic_DNA"/>
</dbReference>
<dbReference type="SMR" id="A9MIS5"/>
<dbReference type="STRING" id="41514.SARI_02101"/>
<dbReference type="KEGG" id="ses:SARI_02101"/>
<dbReference type="HOGENOM" id="CLU_027534_3_0_6"/>
<dbReference type="Proteomes" id="UP000002084">
    <property type="component" value="Chromosome"/>
</dbReference>
<dbReference type="GO" id="GO:0005737">
    <property type="term" value="C:cytoplasm"/>
    <property type="evidence" value="ECO:0007669"/>
    <property type="project" value="UniProtKB-SubCell"/>
</dbReference>
<dbReference type="GO" id="GO:0052907">
    <property type="term" value="F:23S rRNA (adenine(1618)-N(6))-methyltransferase activity"/>
    <property type="evidence" value="ECO:0007669"/>
    <property type="project" value="UniProtKB-EC"/>
</dbReference>
<dbReference type="GO" id="GO:0070475">
    <property type="term" value="P:rRNA base methylation"/>
    <property type="evidence" value="ECO:0007669"/>
    <property type="project" value="TreeGrafter"/>
</dbReference>
<dbReference type="CDD" id="cd02440">
    <property type="entry name" value="AdoMet_MTases"/>
    <property type="match status" value="1"/>
</dbReference>
<dbReference type="FunFam" id="3.40.50.150:FF:000045">
    <property type="entry name" value="Ribosomal RNA large subunit methyltransferase F"/>
    <property type="match status" value="1"/>
</dbReference>
<dbReference type="Gene3D" id="3.40.50.150">
    <property type="entry name" value="Vaccinia Virus protein VP39"/>
    <property type="match status" value="1"/>
</dbReference>
<dbReference type="HAMAP" id="MF_01848">
    <property type="entry name" value="23SrRNA_methyltr_F"/>
    <property type="match status" value="1"/>
</dbReference>
<dbReference type="InterPro" id="IPR010286">
    <property type="entry name" value="METTL16/RlmF"/>
</dbReference>
<dbReference type="InterPro" id="IPR016909">
    <property type="entry name" value="rRNA_lsu_MeTfrase_F"/>
</dbReference>
<dbReference type="InterPro" id="IPR029063">
    <property type="entry name" value="SAM-dependent_MTases_sf"/>
</dbReference>
<dbReference type="NCBIfam" id="NF008725">
    <property type="entry name" value="PRK11727.1"/>
    <property type="match status" value="1"/>
</dbReference>
<dbReference type="PANTHER" id="PTHR13393:SF0">
    <property type="entry name" value="RNA N6-ADENOSINE-METHYLTRANSFERASE METTL16"/>
    <property type="match status" value="1"/>
</dbReference>
<dbReference type="PANTHER" id="PTHR13393">
    <property type="entry name" value="SAM-DEPENDENT METHYLTRANSFERASE"/>
    <property type="match status" value="1"/>
</dbReference>
<dbReference type="Pfam" id="PF05971">
    <property type="entry name" value="Methyltransf_10"/>
    <property type="match status" value="1"/>
</dbReference>
<dbReference type="PIRSF" id="PIRSF029038">
    <property type="entry name" value="Mtase_YbiN_prd"/>
    <property type="match status" value="1"/>
</dbReference>
<dbReference type="SUPFAM" id="SSF53335">
    <property type="entry name" value="S-adenosyl-L-methionine-dependent methyltransferases"/>
    <property type="match status" value="1"/>
</dbReference>
<feature type="chain" id="PRO_0000349945" description="Ribosomal RNA large subunit methyltransferase F">
    <location>
        <begin position="1"/>
        <end position="308"/>
    </location>
</feature>
<organism>
    <name type="scientific">Salmonella arizonae (strain ATCC BAA-731 / CDC346-86 / RSK2980)</name>
    <dbReference type="NCBI Taxonomy" id="41514"/>
    <lineage>
        <taxon>Bacteria</taxon>
        <taxon>Pseudomonadati</taxon>
        <taxon>Pseudomonadota</taxon>
        <taxon>Gammaproteobacteria</taxon>
        <taxon>Enterobacterales</taxon>
        <taxon>Enterobacteriaceae</taxon>
        <taxon>Salmonella</taxon>
    </lineage>
</organism>
<gene>
    <name evidence="1" type="primary">rlmF</name>
    <name type="ordered locus">SARI_02101</name>
</gene>
<keyword id="KW-0963">Cytoplasm</keyword>
<keyword id="KW-0489">Methyltransferase</keyword>
<keyword id="KW-1185">Reference proteome</keyword>
<keyword id="KW-0698">rRNA processing</keyword>
<keyword id="KW-0949">S-adenosyl-L-methionine</keyword>
<keyword id="KW-0808">Transferase</keyword>
<evidence type="ECO:0000255" key="1">
    <source>
        <dbReference type="HAMAP-Rule" id="MF_01848"/>
    </source>
</evidence>
<name>RLMF_SALAR</name>